<evidence type="ECO:0000250" key="1"/>
<evidence type="ECO:0000250" key="2">
    <source>
        <dbReference type="UniProtKB" id="O15504"/>
    </source>
</evidence>
<evidence type="ECO:0000255" key="3">
    <source>
        <dbReference type="PROSITE-ProRule" id="PRU00723"/>
    </source>
</evidence>
<evidence type="ECO:0000256" key="4">
    <source>
        <dbReference type="SAM" id="MobiDB-lite"/>
    </source>
</evidence>
<evidence type="ECO:0000303" key="5">
    <source ref="1"/>
</evidence>
<evidence type="ECO:0000305" key="6"/>
<name>NUP42_XENLA</name>
<dbReference type="EMBL" id="BC084406">
    <property type="status" value="NOT_ANNOTATED_CDS"/>
    <property type="molecule type" value="mRNA"/>
</dbReference>
<dbReference type="EMBL" id="BC097795">
    <property type="status" value="NOT_ANNOTATED_CDS"/>
    <property type="molecule type" value="mRNA"/>
</dbReference>
<dbReference type="SMR" id="Q5XGN1"/>
<dbReference type="AGR" id="Xenbase:XB-GENE-6254296"/>
<dbReference type="Xenbase" id="XB-GENE-6254296">
    <property type="gene designation" value="nup42.L"/>
</dbReference>
<dbReference type="CD-CODE" id="0DA90D7A">
    <property type="entry name" value="Nuclear pore complex"/>
</dbReference>
<dbReference type="Proteomes" id="UP000186698">
    <property type="component" value="Unplaced"/>
</dbReference>
<dbReference type="GO" id="GO:0031965">
    <property type="term" value="C:nuclear membrane"/>
    <property type="evidence" value="ECO:0007669"/>
    <property type="project" value="UniProtKB-SubCell"/>
</dbReference>
<dbReference type="GO" id="GO:0005643">
    <property type="term" value="C:nuclear pore"/>
    <property type="evidence" value="ECO:0007669"/>
    <property type="project" value="UniProtKB-SubCell"/>
</dbReference>
<dbReference type="GO" id="GO:0005049">
    <property type="term" value="F:nuclear export signal receptor activity"/>
    <property type="evidence" value="ECO:0000318"/>
    <property type="project" value="GO_Central"/>
</dbReference>
<dbReference type="GO" id="GO:0008270">
    <property type="term" value="F:zinc ion binding"/>
    <property type="evidence" value="ECO:0007669"/>
    <property type="project" value="UniProtKB-KW"/>
</dbReference>
<dbReference type="GO" id="GO:0051028">
    <property type="term" value="P:mRNA transport"/>
    <property type="evidence" value="ECO:0007669"/>
    <property type="project" value="UniProtKB-KW"/>
</dbReference>
<dbReference type="GO" id="GO:0015031">
    <property type="term" value="P:protein transport"/>
    <property type="evidence" value="ECO:0007669"/>
    <property type="project" value="UniProtKB-KW"/>
</dbReference>
<dbReference type="Gene3D" id="4.10.1000.10">
    <property type="entry name" value="Zinc finger, CCCH-type"/>
    <property type="match status" value="1"/>
</dbReference>
<dbReference type="InterPro" id="IPR051767">
    <property type="entry name" value="Nucleoporin_NUP42"/>
</dbReference>
<dbReference type="InterPro" id="IPR000571">
    <property type="entry name" value="Znf_CCCH"/>
</dbReference>
<dbReference type="PANTHER" id="PTHR46527:SF1">
    <property type="entry name" value="NUCLEOPORIN NUP42"/>
    <property type="match status" value="1"/>
</dbReference>
<dbReference type="PANTHER" id="PTHR46527">
    <property type="entry name" value="NUCLEOPORIN-LIKE PROTEIN 2"/>
    <property type="match status" value="1"/>
</dbReference>
<dbReference type="SMART" id="SM00356">
    <property type="entry name" value="ZnF_C3H1"/>
    <property type="match status" value="1"/>
</dbReference>
<dbReference type="PROSITE" id="PS50103">
    <property type="entry name" value="ZF_C3H1"/>
    <property type="match status" value="1"/>
</dbReference>
<keyword id="KW-0025">Alternative splicing</keyword>
<keyword id="KW-0472">Membrane</keyword>
<keyword id="KW-0479">Metal-binding</keyword>
<keyword id="KW-0509">mRNA transport</keyword>
<keyword id="KW-0906">Nuclear pore complex</keyword>
<keyword id="KW-0539">Nucleus</keyword>
<keyword id="KW-0653">Protein transport</keyword>
<keyword id="KW-1185">Reference proteome</keyword>
<keyword id="KW-0677">Repeat</keyword>
<keyword id="KW-0811">Translocation</keyword>
<keyword id="KW-0813">Transport</keyword>
<keyword id="KW-0862">Zinc</keyword>
<keyword id="KW-0863">Zinc-finger</keyword>
<protein>
    <recommendedName>
        <fullName evidence="6">Nucleoporin NUP42</fullName>
    </recommendedName>
    <alternativeName>
        <fullName>Nucleoporin-like protein 2</fullName>
    </alternativeName>
</protein>
<gene>
    <name type="primary">nup42</name>
    <name type="synonym">nupl2</name>
</gene>
<organism>
    <name type="scientific">Xenopus laevis</name>
    <name type="common">African clawed frog</name>
    <dbReference type="NCBI Taxonomy" id="8355"/>
    <lineage>
        <taxon>Eukaryota</taxon>
        <taxon>Metazoa</taxon>
        <taxon>Chordata</taxon>
        <taxon>Craniata</taxon>
        <taxon>Vertebrata</taxon>
        <taxon>Euteleostomi</taxon>
        <taxon>Amphibia</taxon>
        <taxon>Batrachia</taxon>
        <taxon>Anura</taxon>
        <taxon>Pipoidea</taxon>
        <taxon>Pipidae</taxon>
        <taxon>Xenopodinae</taxon>
        <taxon>Xenopus</taxon>
        <taxon>Xenopus</taxon>
    </lineage>
</organism>
<feature type="chain" id="PRO_0000204900" description="Nucleoporin NUP42">
    <location>
        <begin position="1"/>
        <end position="491"/>
    </location>
</feature>
<feature type="repeat" description="FG 1">
    <location>
        <begin position="110"/>
        <end position="111"/>
    </location>
</feature>
<feature type="repeat" description="FG 2">
    <location>
        <begin position="259"/>
        <end position="260"/>
    </location>
</feature>
<feature type="repeat" description="FG 3">
    <location>
        <begin position="302"/>
        <end position="303"/>
    </location>
</feature>
<feature type="repeat" description="FG 4">
    <location>
        <begin position="312"/>
        <end position="313"/>
    </location>
</feature>
<feature type="repeat" description="FG 5">
    <location>
        <begin position="333"/>
        <end position="334"/>
    </location>
</feature>
<feature type="repeat" description="FG 6">
    <location>
        <begin position="342"/>
        <end position="343"/>
    </location>
</feature>
<feature type="repeat" description="FG 7">
    <location>
        <begin position="363"/>
        <end position="364"/>
    </location>
</feature>
<feature type="repeat" description="FG 8">
    <location>
        <begin position="375"/>
        <end position="376"/>
    </location>
</feature>
<feature type="repeat" description="FG 9">
    <location>
        <begin position="379"/>
        <end position="380"/>
    </location>
</feature>
<feature type="repeat" description="FG 10">
    <location>
        <begin position="410"/>
        <end position="411"/>
    </location>
</feature>
<feature type="zinc finger region" description="C3H1-type" evidence="3">
    <location>
        <begin position="1"/>
        <end position="25"/>
    </location>
</feature>
<feature type="region of interest" description="Disordered" evidence="4">
    <location>
        <begin position="23"/>
        <end position="82"/>
    </location>
</feature>
<feature type="region of interest" description="Disordered" evidence="4">
    <location>
        <begin position="92"/>
        <end position="111"/>
    </location>
</feature>
<feature type="compositionally biased region" description="Polar residues" evidence="4">
    <location>
        <begin position="33"/>
        <end position="64"/>
    </location>
</feature>
<feature type="splice variant" id="VSP_016485" description="In isoform 2." evidence="5">
    <location>
        <begin position="48"/>
        <end position="53"/>
    </location>
</feature>
<feature type="sequence conflict" description="In Ref. 1; BC097795." evidence="6" ref="1">
    <original>N</original>
    <variation>S</variation>
    <location>
        <position position="38"/>
    </location>
</feature>
<feature type="sequence conflict" description="In Ref. 1; BC097795." evidence="6" ref="1">
    <original>A</original>
    <variation>T</variation>
    <location>
        <position position="131"/>
    </location>
</feature>
<comment type="function">
    <text evidence="1">Required for the export of mRNAs containing poly(A) tails from the nucleus into the cytoplasm.</text>
</comment>
<comment type="subunit">
    <text>Probable component of the nuclear pore complex (NPC).</text>
</comment>
<comment type="subcellular location">
    <subcellularLocation>
        <location evidence="2">Nucleus</location>
        <location evidence="2">Nuclear pore complex</location>
    </subcellularLocation>
    <subcellularLocation>
        <location evidence="2">Nucleus membrane</location>
        <topology evidence="2">Peripheral membrane protein</topology>
        <orientation evidence="2">Cytoplasmic side</orientation>
    </subcellularLocation>
</comment>
<comment type="alternative products">
    <event type="alternative splicing"/>
    <isoform>
        <id>Q5XGN1-1</id>
        <name>1</name>
        <sequence type="displayed"/>
    </isoform>
    <isoform>
        <id>Q5XGN1-2</id>
        <name>2</name>
        <sequence type="described" ref="VSP_016485"/>
    </isoform>
</comment>
<comment type="domain">
    <text evidence="1">The FG repeats are interaction sites for karyopherins (importins, exportins) and form probably an affinity gradient, guiding the transport proteins unidirectionally with their cargo through the NPC.</text>
</comment>
<sequence length="491" mass="51705">MAICNFFLQGRCRYGEKCWNEHPRGGGGGGGNRYQSQNRYQEQSRYQEQSRYPEQSRYPEQNRYQEPAGNAKGTWGASSQRYVQPSNFSKSTTWINRDSEKPSAGSFSGFGSRNVKSTAATGLPSTQNRFAALSSQDNSRDGQTDKGNILDDIMKDMEIWESSGQWMFSVYSMLKEKKNISGFTDFSPEELRLEYSVCQAEGNPLKYINAVQQLGSKWKQRILELKNPNPSIKTALLNELNSPSPDVTPGYSGQQNSAFGALSFPTSNTAPTAVTFSFKADTTTAAKPAVPNALAGSDFSAFGNKPTSAPSFGSGVAAAAASFSFAPSTISGFGSTASNSGFGAASNAAGFQGAANIAAAPAFGVASSTAPASGFGGGFGTTVNTGAKTSSVRDLFSAGTAVPVQTTLLFGQATGSLNTTASSTSLAGQPFKASTSATAVSGSFTSDNTSNPLFTPRNELSVEDLAQFEAKQFTLGKTPIKPPSADLLKVT</sequence>
<accession>Q5XGN1</accession>
<accession>Q4QQY9</accession>
<proteinExistence type="evidence at transcript level"/>
<reference key="1">
    <citation type="submission" date="2004-10" db="EMBL/GenBank/DDBJ databases">
        <authorList>
            <consortium name="NIH - Xenopus Gene Collection (XGC) project"/>
        </authorList>
    </citation>
    <scope>NUCLEOTIDE SEQUENCE [LARGE SCALE MRNA] (ISOFORM 1)</scope>
    <scope>NUCLEOTIDE SEQUENCE [LARGE SCALE MRNA] OF 7-491 (ISOFORM 2)</scope>
    <source>
        <tissue>Egg</tissue>
        <tissue>Eye</tissue>
    </source>
</reference>